<feature type="chain" id="PRO_1000059586" description="Chaperone protein DnaK">
    <location>
        <begin position="1"/>
        <end position="614"/>
    </location>
</feature>
<feature type="region of interest" description="Disordered" evidence="2">
    <location>
        <begin position="573"/>
        <end position="614"/>
    </location>
</feature>
<feature type="modified residue" description="Phosphothreonine; by autocatalysis" evidence="1">
    <location>
        <position position="174"/>
    </location>
</feature>
<organism>
    <name type="scientific">Lactobacillus delbrueckii subsp. bulgaricus (strain ATCC 11842 / DSM 20081 / BCRC 10696 / JCM 1002 / NBRC 13953 / NCIMB 11778 / NCTC 12712 / WDCM 00102 / Lb 14)</name>
    <dbReference type="NCBI Taxonomy" id="390333"/>
    <lineage>
        <taxon>Bacteria</taxon>
        <taxon>Bacillati</taxon>
        <taxon>Bacillota</taxon>
        <taxon>Bacilli</taxon>
        <taxon>Lactobacillales</taxon>
        <taxon>Lactobacillaceae</taxon>
        <taxon>Lactobacillus</taxon>
    </lineage>
</organism>
<dbReference type="EMBL" id="CR954253">
    <property type="protein sequence ID" value="CAI98114.1"/>
    <property type="molecule type" value="Genomic_DNA"/>
</dbReference>
<dbReference type="RefSeq" id="WP_003618620.1">
    <property type="nucleotide sequence ID" value="NZ_JQAV01000005.1"/>
</dbReference>
<dbReference type="SMR" id="Q1G9R2"/>
<dbReference type="STRING" id="390333.Ldb1313"/>
<dbReference type="KEGG" id="ldb:Ldb1313"/>
<dbReference type="PATRIC" id="fig|390333.13.peg.1594"/>
<dbReference type="eggNOG" id="COG0443">
    <property type="taxonomic scope" value="Bacteria"/>
</dbReference>
<dbReference type="HOGENOM" id="CLU_005965_2_4_9"/>
<dbReference type="BioCyc" id="LDEL390333:LDB_RS05615-MONOMER"/>
<dbReference type="Proteomes" id="UP000001259">
    <property type="component" value="Chromosome"/>
</dbReference>
<dbReference type="GO" id="GO:0005524">
    <property type="term" value="F:ATP binding"/>
    <property type="evidence" value="ECO:0007669"/>
    <property type="project" value="UniProtKB-UniRule"/>
</dbReference>
<dbReference type="GO" id="GO:0140662">
    <property type="term" value="F:ATP-dependent protein folding chaperone"/>
    <property type="evidence" value="ECO:0007669"/>
    <property type="project" value="InterPro"/>
</dbReference>
<dbReference type="GO" id="GO:0051082">
    <property type="term" value="F:unfolded protein binding"/>
    <property type="evidence" value="ECO:0007669"/>
    <property type="project" value="InterPro"/>
</dbReference>
<dbReference type="CDD" id="cd10234">
    <property type="entry name" value="ASKHA_NBD_HSP70_DnaK-like"/>
    <property type="match status" value="1"/>
</dbReference>
<dbReference type="FunFam" id="2.60.34.10:FF:000014">
    <property type="entry name" value="Chaperone protein DnaK HSP70"/>
    <property type="match status" value="1"/>
</dbReference>
<dbReference type="FunFam" id="1.20.1270.10:FF:000001">
    <property type="entry name" value="Molecular chaperone DnaK"/>
    <property type="match status" value="1"/>
</dbReference>
<dbReference type="FunFam" id="3.30.420.40:FF:000071">
    <property type="entry name" value="Molecular chaperone DnaK"/>
    <property type="match status" value="1"/>
</dbReference>
<dbReference type="FunFam" id="3.90.640.10:FF:000003">
    <property type="entry name" value="Molecular chaperone DnaK"/>
    <property type="match status" value="1"/>
</dbReference>
<dbReference type="Gene3D" id="1.20.1270.10">
    <property type="match status" value="1"/>
</dbReference>
<dbReference type="Gene3D" id="3.30.420.40">
    <property type="match status" value="2"/>
</dbReference>
<dbReference type="Gene3D" id="3.90.640.10">
    <property type="entry name" value="Actin, Chain A, domain 4"/>
    <property type="match status" value="1"/>
</dbReference>
<dbReference type="Gene3D" id="2.60.34.10">
    <property type="entry name" value="Substrate Binding Domain Of DNAk, Chain A, domain 1"/>
    <property type="match status" value="1"/>
</dbReference>
<dbReference type="HAMAP" id="MF_00332">
    <property type="entry name" value="DnaK"/>
    <property type="match status" value="1"/>
</dbReference>
<dbReference type="InterPro" id="IPR043129">
    <property type="entry name" value="ATPase_NBD"/>
</dbReference>
<dbReference type="InterPro" id="IPR012725">
    <property type="entry name" value="Chaperone_DnaK"/>
</dbReference>
<dbReference type="InterPro" id="IPR018181">
    <property type="entry name" value="Heat_shock_70_CS"/>
</dbReference>
<dbReference type="InterPro" id="IPR029048">
    <property type="entry name" value="HSP70_C_sf"/>
</dbReference>
<dbReference type="InterPro" id="IPR029047">
    <property type="entry name" value="HSP70_peptide-bd_sf"/>
</dbReference>
<dbReference type="InterPro" id="IPR013126">
    <property type="entry name" value="Hsp_70_fam"/>
</dbReference>
<dbReference type="NCBIfam" id="NF001413">
    <property type="entry name" value="PRK00290.1"/>
    <property type="match status" value="1"/>
</dbReference>
<dbReference type="NCBIfam" id="TIGR02350">
    <property type="entry name" value="prok_dnaK"/>
    <property type="match status" value="1"/>
</dbReference>
<dbReference type="PANTHER" id="PTHR19375">
    <property type="entry name" value="HEAT SHOCK PROTEIN 70KDA"/>
    <property type="match status" value="1"/>
</dbReference>
<dbReference type="Pfam" id="PF00012">
    <property type="entry name" value="HSP70"/>
    <property type="match status" value="1"/>
</dbReference>
<dbReference type="PRINTS" id="PR00301">
    <property type="entry name" value="HEATSHOCK70"/>
</dbReference>
<dbReference type="SUPFAM" id="SSF53067">
    <property type="entry name" value="Actin-like ATPase domain"/>
    <property type="match status" value="2"/>
</dbReference>
<dbReference type="SUPFAM" id="SSF100934">
    <property type="entry name" value="Heat shock protein 70kD (HSP70), C-terminal subdomain"/>
    <property type="match status" value="1"/>
</dbReference>
<dbReference type="SUPFAM" id="SSF100920">
    <property type="entry name" value="Heat shock protein 70kD (HSP70), peptide-binding domain"/>
    <property type="match status" value="1"/>
</dbReference>
<dbReference type="PROSITE" id="PS00297">
    <property type="entry name" value="HSP70_1"/>
    <property type="match status" value="1"/>
</dbReference>
<dbReference type="PROSITE" id="PS00329">
    <property type="entry name" value="HSP70_2"/>
    <property type="match status" value="1"/>
</dbReference>
<dbReference type="PROSITE" id="PS01036">
    <property type="entry name" value="HSP70_3"/>
    <property type="match status" value="1"/>
</dbReference>
<sequence>MSKVIGIDLGTTNSAVAVLEGKEPKIITNPEGARTTPSVVAFKDGEIQVGEVAKRQAITNPNTIVSIKRHMGESDYKVKVGDKAYTPQEISAMILQYIKKFSEDYLGEPVTDAVITVPAYFNDAQRQATKDAGKIAGLNVQRIINEPTASALAYGLDKDEDDETVLVYDLGGGTFDVSVLQLGDGVFQVLSTNGDTHLGGDDFDNKIIDWLVDGFKQENGIDLSKDKMAMQRLKDAAEKAKKDLSGVSSTHISLPFISAGEAGPLHLEVDLTRAKFNELTDDLVQRTKIPFDNALRDAGLSVGDIDKVILNGGSTRIPAVQEAVKQWAGKEPDHSINPDEAVALGAAIQGGVISGDVKDIVLLDVTPLSLGIETKGGVFTKLIDRNTTIPTSKSQIFSTAVDNQPAVDIHVLQGERPMAADNKTLGRFELTDIPAAPRGVPQIQVTFDIDKNGIVNVSAKDLGTGKEQKITIQSASGLSDEEIERMKKEAEEHAEEDAKKKEEVDLRNEVDGLIFQTEKTLKEVDGKLADSDIQPVKDALEDLKKAQKDNNLDEMKEKKDALSKVAQDLAVKLYQQNSQNQQGQGGQAGPTDDGSNGANGDTVDGDFTKVDPDK</sequence>
<accession>Q1G9R2</accession>
<keyword id="KW-0067">ATP-binding</keyword>
<keyword id="KW-0143">Chaperone</keyword>
<keyword id="KW-0547">Nucleotide-binding</keyword>
<keyword id="KW-0597">Phosphoprotein</keyword>
<keyword id="KW-1185">Reference proteome</keyword>
<keyword id="KW-0346">Stress response</keyword>
<proteinExistence type="inferred from homology"/>
<comment type="function">
    <text evidence="1">Acts as a chaperone.</text>
</comment>
<comment type="induction">
    <text evidence="1">By stress conditions e.g. heat shock.</text>
</comment>
<comment type="similarity">
    <text evidence="1">Belongs to the heat shock protein 70 family.</text>
</comment>
<reference key="1">
    <citation type="journal article" date="2006" name="Proc. Natl. Acad. Sci. U.S.A.">
        <title>The complete genome sequence of Lactobacillus bulgaricus reveals extensive and ongoing reductive evolution.</title>
        <authorList>
            <person name="van de Guchte M."/>
            <person name="Penaud S."/>
            <person name="Grimaldi C."/>
            <person name="Barbe V."/>
            <person name="Bryson K."/>
            <person name="Nicolas P."/>
            <person name="Robert C."/>
            <person name="Oztas S."/>
            <person name="Mangenot S."/>
            <person name="Couloux A."/>
            <person name="Loux V."/>
            <person name="Dervyn R."/>
            <person name="Bossy R."/>
            <person name="Bolotin A."/>
            <person name="Batto J.-M."/>
            <person name="Walunas T."/>
            <person name="Gibrat J.-F."/>
            <person name="Bessieres P."/>
            <person name="Weissenbach J."/>
            <person name="Ehrlich S.D."/>
            <person name="Maguin E."/>
        </authorList>
    </citation>
    <scope>NUCLEOTIDE SEQUENCE [LARGE SCALE GENOMIC DNA]</scope>
    <source>
        <strain>ATCC 11842 / DSM 20081 / BCRC 10696 / JCM 1002 / NBRC 13953 / NCIMB 11778 / NCTC 12712 / WDCM 00102 / Lb 14</strain>
    </source>
</reference>
<protein>
    <recommendedName>
        <fullName evidence="1">Chaperone protein DnaK</fullName>
    </recommendedName>
    <alternativeName>
        <fullName evidence="1">HSP70</fullName>
    </alternativeName>
    <alternativeName>
        <fullName evidence="1">Heat shock 70 kDa protein</fullName>
    </alternativeName>
    <alternativeName>
        <fullName evidence="1">Heat shock protein 70</fullName>
    </alternativeName>
</protein>
<name>DNAK_LACDA</name>
<gene>
    <name evidence="1" type="primary">dnaK</name>
    <name type="ordered locus">Ldb1313</name>
</gene>
<evidence type="ECO:0000255" key="1">
    <source>
        <dbReference type="HAMAP-Rule" id="MF_00332"/>
    </source>
</evidence>
<evidence type="ECO:0000256" key="2">
    <source>
        <dbReference type="SAM" id="MobiDB-lite"/>
    </source>
</evidence>